<organism>
    <name type="scientific">Burkholderia thailandensis (strain ATCC 700388 / DSM 13276 / CCUG 48851 / CIP 106301 / E264)</name>
    <dbReference type="NCBI Taxonomy" id="271848"/>
    <lineage>
        <taxon>Bacteria</taxon>
        <taxon>Pseudomonadati</taxon>
        <taxon>Pseudomonadota</taxon>
        <taxon>Betaproteobacteria</taxon>
        <taxon>Burkholderiales</taxon>
        <taxon>Burkholderiaceae</taxon>
        <taxon>Burkholderia</taxon>
        <taxon>pseudomallei group</taxon>
    </lineage>
</organism>
<feature type="chain" id="PRO_0000258922" description="Oxygen-dependent choline dehydrogenase">
    <location>
        <begin position="1"/>
        <end position="565"/>
    </location>
</feature>
<feature type="active site" description="Proton acceptor" evidence="1">
    <location>
        <position position="474"/>
    </location>
</feature>
<feature type="binding site" evidence="1">
    <location>
        <begin position="7"/>
        <end position="36"/>
    </location>
    <ligand>
        <name>FAD</name>
        <dbReference type="ChEBI" id="CHEBI:57692"/>
    </ligand>
</feature>
<name>BETA_BURTA</name>
<accession>Q2T6D0</accession>
<proteinExistence type="inferred from homology"/>
<protein>
    <recommendedName>
        <fullName evidence="1">Oxygen-dependent choline dehydrogenase</fullName>
        <shortName evidence="1">CDH</shortName>
        <shortName evidence="1">CHD</shortName>
        <ecNumber evidence="1">1.1.99.1</ecNumber>
    </recommendedName>
    <alternativeName>
        <fullName evidence="1">Betaine aldehyde dehydrogenase</fullName>
        <shortName evidence="1">BADH</shortName>
        <ecNumber evidence="1">1.2.1.8</ecNumber>
    </alternativeName>
</protein>
<gene>
    <name evidence="1" type="primary">betA</name>
    <name type="ordered locus">BTH_II1072</name>
</gene>
<evidence type="ECO:0000255" key="1">
    <source>
        <dbReference type="HAMAP-Rule" id="MF_00750"/>
    </source>
</evidence>
<comment type="function">
    <text evidence="1">Involved in the biosynthesis of the osmoprotectant glycine betaine. Catalyzes the oxidation of choline to betaine aldehyde and betaine aldehyde to glycine betaine at the same rate.</text>
</comment>
<comment type="catalytic activity">
    <reaction evidence="1">
        <text>choline + A = betaine aldehyde + AH2</text>
        <dbReference type="Rhea" id="RHEA:17433"/>
        <dbReference type="ChEBI" id="CHEBI:13193"/>
        <dbReference type="ChEBI" id="CHEBI:15354"/>
        <dbReference type="ChEBI" id="CHEBI:15710"/>
        <dbReference type="ChEBI" id="CHEBI:17499"/>
        <dbReference type="EC" id="1.1.99.1"/>
    </reaction>
</comment>
<comment type="catalytic activity">
    <reaction evidence="1">
        <text>betaine aldehyde + NAD(+) + H2O = glycine betaine + NADH + 2 H(+)</text>
        <dbReference type="Rhea" id="RHEA:15305"/>
        <dbReference type="ChEBI" id="CHEBI:15377"/>
        <dbReference type="ChEBI" id="CHEBI:15378"/>
        <dbReference type="ChEBI" id="CHEBI:15710"/>
        <dbReference type="ChEBI" id="CHEBI:17750"/>
        <dbReference type="ChEBI" id="CHEBI:57540"/>
        <dbReference type="ChEBI" id="CHEBI:57945"/>
        <dbReference type="EC" id="1.2.1.8"/>
    </reaction>
</comment>
<comment type="cofactor">
    <cofactor evidence="1">
        <name>FAD</name>
        <dbReference type="ChEBI" id="CHEBI:57692"/>
    </cofactor>
</comment>
<comment type="pathway">
    <text evidence="1">Amine and polyamine biosynthesis; betaine biosynthesis via choline pathway; betaine aldehyde from choline (cytochrome c reductase route): step 1/1.</text>
</comment>
<comment type="similarity">
    <text evidence="1">Belongs to the GMC oxidoreductase family.</text>
</comment>
<keyword id="KW-0274">FAD</keyword>
<keyword id="KW-0285">Flavoprotein</keyword>
<keyword id="KW-0520">NAD</keyword>
<keyword id="KW-0560">Oxidoreductase</keyword>
<dbReference type="EC" id="1.1.99.1" evidence="1"/>
<dbReference type="EC" id="1.2.1.8" evidence="1"/>
<dbReference type="EMBL" id="CP000085">
    <property type="protein sequence ID" value="ABC35233.1"/>
    <property type="molecule type" value="Genomic_DNA"/>
</dbReference>
<dbReference type="RefSeq" id="WP_009896556.1">
    <property type="nucleotide sequence ID" value="NZ_CP008786.1"/>
</dbReference>
<dbReference type="SMR" id="Q2T6D0"/>
<dbReference type="GeneID" id="45118530"/>
<dbReference type="KEGG" id="bte:BTH_II1072"/>
<dbReference type="HOGENOM" id="CLU_002865_7_1_4"/>
<dbReference type="UniPathway" id="UPA00529">
    <property type="reaction ID" value="UER00385"/>
</dbReference>
<dbReference type="Proteomes" id="UP000001930">
    <property type="component" value="Chromosome II"/>
</dbReference>
<dbReference type="GO" id="GO:0016020">
    <property type="term" value="C:membrane"/>
    <property type="evidence" value="ECO:0007669"/>
    <property type="project" value="TreeGrafter"/>
</dbReference>
<dbReference type="GO" id="GO:0008802">
    <property type="term" value="F:betaine-aldehyde dehydrogenase (NAD+) activity"/>
    <property type="evidence" value="ECO:0007669"/>
    <property type="project" value="UniProtKB-EC"/>
</dbReference>
<dbReference type="GO" id="GO:0008812">
    <property type="term" value="F:choline dehydrogenase activity"/>
    <property type="evidence" value="ECO:0007669"/>
    <property type="project" value="UniProtKB-UniRule"/>
</dbReference>
<dbReference type="GO" id="GO:0050660">
    <property type="term" value="F:flavin adenine dinucleotide binding"/>
    <property type="evidence" value="ECO:0007669"/>
    <property type="project" value="InterPro"/>
</dbReference>
<dbReference type="GO" id="GO:0019285">
    <property type="term" value="P:glycine betaine biosynthetic process from choline"/>
    <property type="evidence" value="ECO:0007669"/>
    <property type="project" value="UniProtKB-UniRule"/>
</dbReference>
<dbReference type="Gene3D" id="3.50.50.60">
    <property type="entry name" value="FAD/NAD(P)-binding domain"/>
    <property type="match status" value="1"/>
</dbReference>
<dbReference type="Gene3D" id="3.30.560.10">
    <property type="entry name" value="Glucose Oxidase, domain 3"/>
    <property type="match status" value="1"/>
</dbReference>
<dbReference type="HAMAP" id="MF_00750">
    <property type="entry name" value="Choline_dehydrogen"/>
    <property type="match status" value="1"/>
</dbReference>
<dbReference type="InterPro" id="IPR011533">
    <property type="entry name" value="BetA"/>
</dbReference>
<dbReference type="InterPro" id="IPR036188">
    <property type="entry name" value="FAD/NAD-bd_sf"/>
</dbReference>
<dbReference type="InterPro" id="IPR012132">
    <property type="entry name" value="GMC_OxRdtase"/>
</dbReference>
<dbReference type="InterPro" id="IPR000172">
    <property type="entry name" value="GMC_OxRdtase_N"/>
</dbReference>
<dbReference type="InterPro" id="IPR007867">
    <property type="entry name" value="GMC_OxRtase_C"/>
</dbReference>
<dbReference type="NCBIfam" id="TIGR01810">
    <property type="entry name" value="betA"/>
    <property type="match status" value="1"/>
</dbReference>
<dbReference type="NCBIfam" id="NF002550">
    <property type="entry name" value="PRK02106.1"/>
    <property type="match status" value="1"/>
</dbReference>
<dbReference type="PANTHER" id="PTHR11552:SF147">
    <property type="entry name" value="CHOLINE DEHYDROGENASE, MITOCHONDRIAL"/>
    <property type="match status" value="1"/>
</dbReference>
<dbReference type="PANTHER" id="PTHR11552">
    <property type="entry name" value="GLUCOSE-METHANOL-CHOLINE GMC OXIDOREDUCTASE"/>
    <property type="match status" value="1"/>
</dbReference>
<dbReference type="Pfam" id="PF05199">
    <property type="entry name" value="GMC_oxred_C"/>
    <property type="match status" value="1"/>
</dbReference>
<dbReference type="Pfam" id="PF00732">
    <property type="entry name" value="GMC_oxred_N"/>
    <property type="match status" value="1"/>
</dbReference>
<dbReference type="PIRSF" id="PIRSF000137">
    <property type="entry name" value="Alcohol_oxidase"/>
    <property type="match status" value="1"/>
</dbReference>
<dbReference type="SUPFAM" id="SSF54373">
    <property type="entry name" value="FAD-linked reductases, C-terminal domain"/>
    <property type="match status" value="1"/>
</dbReference>
<dbReference type="SUPFAM" id="SSF51905">
    <property type="entry name" value="FAD/NAD(P)-binding domain"/>
    <property type="match status" value="1"/>
</dbReference>
<dbReference type="PROSITE" id="PS00623">
    <property type="entry name" value="GMC_OXRED_1"/>
    <property type="match status" value="1"/>
</dbReference>
<dbReference type="PROSITE" id="PS00624">
    <property type="entry name" value="GMC_OXRED_2"/>
    <property type="match status" value="1"/>
</dbReference>
<reference key="1">
    <citation type="journal article" date="2005" name="BMC Genomics">
        <title>Bacterial genome adaptation to niches: divergence of the potential virulence genes in three Burkholderia species of different survival strategies.</title>
        <authorList>
            <person name="Kim H.S."/>
            <person name="Schell M.A."/>
            <person name="Yu Y."/>
            <person name="Ulrich R.L."/>
            <person name="Sarria S.H."/>
            <person name="Nierman W.C."/>
            <person name="DeShazer D."/>
        </authorList>
    </citation>
    <scope>NUCLEOTIDE SEQUENCE [LARGE SCALE GENOMIC DNA]</scope>
    <source>
        <strain>ATCC 700388 / DSM 13276 / CCUG 48851 / CIP 106301 / E264</strain>
    </source>
</reference>
<sequence length="565" mass="62691">MTTREFDYIICGAGSAGNVLATRLTEDPDVTVLLLEAGGPDYRFDFRTQMPAALAYPLQGRRYNWAYETDPEPHMNNRRMECGRGKGLGGSSLINGMCYIRGNALDYDNWSTHKGLEDWTYLDCLPYFRKAETRDVGPNDYHGGDGPVSVTTSKPGVNPLFEAMVEAGVQAGYPRTDDLNGYQQEGFGPMDRTVTPRGRRASTARGYLDQARARPNLEIVTHALADRILFSGKRATGVTFLHGSARVTAHARREVLVCSGAIASPQLLQRSGVGPGEWLRELDIPVVLDLPGVGRNLQDHLEMYIQFECKEPVSLYPALKWWNQPKIGLDWMINGTGLGASNHFEAGGFIRTRDDDLWPNIQYHFLPVAINYNGSNAIEMHGFQAHVGSMRSPSRGRVKLKSRDPNAHPSILFNYMAEALDWREFRDAIRATREIMHQPALDRFRGRELNPGADLKSDNELDAFVRARAETAFHPSCSCKMGYDDMAVVDNEGRVHGIDGLRVVDASIMPIITTGNLNAPTIMIAEKIADKIRKRKPLERSNARYYVANGAPARGGKPARAPAAV</sequence>